<comment type="function">
    <text evidence="1">The beta subunit is responsible for the synthesis of L-tryptophan from indole and L-serine.</text>
</comment>
<comment type="catalytic activity">
    <reaction evidence="1">
        <text>(1S,2R)-1-C-(indol-3-yl)glycerol 3-phosphate + L-serine = D-glyceraldehyde 3-phosphate + L-tryptophan + H2O</text>
        <dbReference type="Rhea" id="RHEA:10532"/>
        <dbReference type="ChEBI" id="CHEBI:15377"/>
        <dbReference type="ChEBI" id="CHEBI:33384"/>
        <dbReference type="ChEBI" id="CHEBI:57912"/>
        <dbReference type="ChEBI" id="CHEBI:58866"/>
        <dbReference type="ChEBI" id="CHEBI:59776"/>
        <dbReference type="EC" id="4.2.1.20"/>
    </reaction>
</comment>
<comment type="cofactor">
    <cofactor evidence="1">
        <name>pyridoxal 5'-phosphate</name>
        <dbReference type="ChEBI" id="CHEBI:597326"/>
    </cofactor>
</comment>
<comment type="pathway">
    <text evidence="1">Amino-acid biosynthesis; L-tryptophan biosynthesis; L-tryptophan from chorismate: step 5/5.</text>
</comment>
<comment type="subunit">
    <text evidence="1">Tetramer of two alpha and two beta chains.</text>
</comment>
<comment type="similarity">
    <text evidence="1">Belongs to the TrpB family.</text>
</comment>
<accession>Q3KK59</accession>
<keyword id="KW-0028">Amino-acid biosynthesis</keyword>
<keyword id="KW-0057">Aromatic amino acid biosynthesis</keyword>
<keyword id="KW-0456">Lyase</keyword>
<keyword id="KW-0663">Pyridoxal phosphate</keyword>
<keyword id="KW-0822">Tryptophan biosynthesis</keyword>
<reference key="1">
    <citation type="journal article" date="2009" name="Genome Biol.">
        <title>Genomic and genetic analyses of diversity and plant interactions of Pseudomonas fluorescens.</title>
        <authorList>
            <person name="Silby M.W."/>
            <person name="Cerdeno-Tarraga A.M."/>
            <person name="Vernikos G.S."/>
            <person name="Giddens S.R."/>
            <person name="Jackson R.W."/>
            <person name="Preston G.M."/>
            <person name="Zhang X.-X."/>
            <person name="Moon C.D."/>
            <person name="Gehrig S.M."/>
            <person name="Godfrey S.A.C."/>
            <person name="Knight C.G."/>
            <person name="Malone J.G."/>
            <person name="Robinson Z."/>
            <person name="Spiers A.J."/>
            <person name="Harris S."/>
            <person name="Challis G.L."/>
            <person name="Yaxley A.M."/>
            <person name="Harris D."/>
            <person name="Seeger K."/>
            <person name="Murphy L."/>
            <person name="Rutter S."/>
            <person name="Squares R."/>
            <person name="Quail M.A."/>
            <person name="Saunders E."/>
            <person name="Mavromatis K."/>
            <person name="Brettin T.S."/>
            <person name="Bentley S.D."/>
            <person name="Hothersall J."/>
            <person name="Stephens E."/>
            <person name="Thomas C.M."/>
            <person name="Parkhill J."/>
            <person name="Levy S.B."/>
            <person name="Rainey P.B."/>
            <person name="Thomson N.R."/>
        </authorList>
    </citation>
    <scope>NUCLEOTIDE SEQUENCE [LARGE SCALE GENOMIC DNA]</scope>
    <source>
        <strain>Pf0-1</strain>
    </source>
</reference>
<feature type="chain" id="PRO_1000057864" description="Tryptophan synthase beta chain">
    <location>
        <begin position="1"/>
        <end position="410"/>
    </location>
</feature>
<feature type="modified residue" description="N6-(pyridoxal phosphate)lysine" evidence="1">
    <location>
        <position position="99"/>
    </location>
</feature>
<sequence>MTQTSNNSDLRNGPDANGLFGSFGGRYVAETLMPLILDLAREYEAAKEDPAFKEELAYFQRDYVGRPSPLYFAERLTEFCGGAKIYLKREELNHTGAHKINNCIGQILLARRMGKKRIIAETGAGMHGVATATVAARFGLDCVIYMGTTDIERQQANVFRMKLLGAEVIPVVAGTGTLKDAMNEALRDWVTNVDSTFYLIGTVAGPHPYPAMVRDFQAVIGKETRDQLQAQEGRLPDSLVACIGGGSNAMGLFHPFLDDKSVEIIGVEAAGYGIETGKHAASLNGGVPGVLHGNRTFLLQDDDGQIIDAHSISAGLDYPGIGPEHAWLHDIGRVQYTSVTDDEALAAFHQCCRLEGIIPALESAHALAEVFKRAPKLPKDHLMVVNLSGRGDKDMQTVMHHMETSKQEKH</sequence>
<organism>
    <name type="scientific">Pseudomonas fluorescens (strain Pf0-1)</name>
    <dbReference type="NCBI Taxonomy" id="205922"/>
    <lineage>
        <taxon>Bacteria</taxon>
        <taxon>Pseudomonadati</taxon>
        <taxon>Pseudomonadota</taxon>
        <taxon>Gammaproteobacteria</taxon>
        <taxon>Pseudomonadales</taxon>
        <taxon>Pseudomonadaceae</taxon>
        <taxon>Pseudomonas</taxon>
    </lineage>
</organism>
<dbReference type="EC" id="4.2.1.20" evidence="1"/>
<dbReference type="EMBL" id="CP000094">
    <property type="protein sequence ID" value="ABA71847.1"/>
    <property type="molecule type" value="Genomic_DNA"/>
</dbReference>
<dbReference type="RefSeq" id="WP_011331822.1">
    <property type="nucleotide sequence ID" value="NC_007492.2"/>
</dbReference>
<dbReference type="SMR" id="Q3KK59"/>
<dbReference type="KEGG" id="pfo:Pfl01_0103"/>
<dbReference type="eggNOG" id="COG0133">
    <property type="taxonomic scope" value="Bacteria"/>
</dbReference>
<dbReference type="HOGENOM" id="CLU_016734_3_1_6"/>
<dbReference type="UniPathway" id="UPA00035">
    <property type="reaction ID" value="UER00044"/>
</dbReference>
<dbReference type="Proteomes" id="UP000002704">
    <property type="component" value="Chromosome"/>
</dbReference>
<dbReference type="GO" id="GO:0005737">
    <property type="term" value="C:cytoplasm"/>
    <property type="evidence" value="ECO:0007669"/>
    <property type="project" value="TreeGrafter"/>
</dbReference>
<dbReference type="GO" id="GO:0004834">
    <property type="term" value="F:tryptophan synthase activity"/>
    <property type="evidence" value="ECO:0007669"/>
    <property type="project" value="UniProtKB-UniRule"/>
</dbReference>
<dbReference type="CDD" id="cd06446">
    <property type="entry name" value="Trp-synth_B"/>
    <property type="match status" value="1"/>
</dbReference>
<dbReference type="FunFam" id="3.40.50.1100:FF:000001">
    <property type="entry name" value="Tryptophan synthase beta chain"/>
    <property type="match status" value="1"/>
</dbReference>
<dbReference type="FunFam" id="3.40.50.1100:FF:000004">
    <property type="entry name" value="Tryptophan synthase beta chain"/>
    <property type="match status" value="1"/>
</dbReference>
<dbReference type="Gene3D" id="3.40.50.1100">
    <property type="match status" value="2"/>
</dbReference>
<dbReference type="HAMAP" id="MF_00133">
    <property type="entry name" value="Trp_synth_beta"/>
    <property type="match status" value="1"/>
</dbReference>
<dbReference type="InterPro" id="IPR006653">
    <property type="entry name" value="Trp_synth_b_CS"/>
</dbReference>
<dbReference type="InterPro" id="IPR006654">
    <property type="entry name" value="Trp_synth_beta"/>
</dbReference>
<dbReference type="InterPro" id="IPR023026">
    <property type="entry name" value="Trp_synth_beta/beta-like"/>
</dbReference>
<dbReference type="InterPro" id="IPR001926">
    <property type="entry name" value="TrpB-like_PALP"/>
</dbReference>
<dbReference type="InterPro" id="IPR036052">
    <property type="entry name" value="TrpB-like_PALP_sf"/>
</dbReference>
<dbReference type="NCBIfam" id="TIGR00263">
    <property type="entry name" value="trpB"/>
    <property type="match status" value="1"/>
</dbReference>
<dbReference type="PANTHER" id="PTHR48077:SF3">
    <property type="entry name" value="TRYPTOPHAN SYNTHASE"/>
    <property type="match status" value="1"/>
</dbReference>
<dbReference type="PANTHER" id="PTHR48077">
    <property type="entry name" value="TRYPTOPHAN SYNTHASE-RELATED"/>
    <property type="match status" value="1"/>
</dbReference>
<dbReference type="Pfam" id="PF00291">
    <property type="entry name" value="PALP"/>
    <property type="match status" value="1"/>
</dbReference>
<dbReference type="PIRSF" id="PIRSF001413">
    <property type="entry name" value="Trp_syn_beta"/>
    <property type="match status" value="1"/>
</dbReference>
<dbReference type="SUPFAM" id="SSF53686">
    <property type="entry name" value="Tryptophan synthase beta subunit-like PLP-dependent enzymes"/>
    <property type="match status" value="1"/>
</dbReference>
<dbReference type="PROSITE" id="PS00168">
    <property type="entry name" value="TRP_SYNTHASE_BETA"/>
    <property type="match status" value="1"/>
</dbReference>
<name>TRPB_PSEPF</name>
<protein>
    <recommendedName>
        <fullName evidence="1">Tryptophan synthase beta chain</fullName>
        <ecNumber evidence="1">4.2.1.20</ecNumber>
    </recommendedName>
</protein>
<evidence type="ECO:0000255" key="1">
    <source>
        <dbReference type="HAMAP-Rule" id="MF_00133"/>
    </source>
</evidence>
<gene>
    <name evidence="1" type="primary">trpB</name>
    <name type="ordered locus">Pfl01_0103</name>
</gene>
<proteinExistence type="inferred from homology"/>